<protein>
    <recommendedName>
        <fullName evidence="1">ATP synthase gamma chain</fullName>
    </recommendedName>
    <alternativeName>
        <fullName evidence="1">ATP synthase F1 sector gamma subunit</fullName>
    </alternativeName>
    <alternativeName>
        <fullName evidence="1">F-ATPase gamma subunit</fullName>
    </alternativeName>
</protein>
<accession>P12408</accession>
<organism>
    <name type="scientific">Nostoc sp. (strain PCC 7120 / SAG 25.82 / UTEX 2576)</name>
    <dbReference type="NCBI Taxonomy" id="103690"/>
    <lineage>
        <taxon>Bacteria</taxon>
        <taxon>Bacillati</taxon>
        <taxon>Cyanobacteriota</taxon>
        <taxon>Cyanophyceae</taxon>
        <taxon>Nostocales</taxon>
        <taxon>Nostocaceae</taxon>
        <taxon>Nostoc</taxon>
    </lineage>
</organism>
<proteinExistence type="inferred from homology"/>
<reference key="1">
    <citation type="journal article" date="1988" name="J. Bacteriol.">
        <title>Genes encoding the alpha, gamma, delta, and four F0 subunits of ATP synthase constitute an operon in the cyanobacterium Anabaena sp. strain PCC 7120.</title>
        <authorList>
            <person name="McCarn D.F."/>
            <person name="Whitaker R.A."/>
            <person name="Alam J."/>
            <person name="Vrba J.M."/>
            <person name="Curtis S.E."/>
        </authorList>
    </citation>
    <scope>NUCLEOTIDE SEQUENCE [GENOMIC DNA]</scope>
</reference>
<reference key="2">
    <citation type="journal article" date="2001" name="DNA Res.">
        <title>Complete genomic sequence of the filamentous nitrogen-fixing cyanobacterium Anabaena sp. strain PCC 7120.</title>
        <authorList>
            <person name="Kaneko T."/>
            <person name="Nakamura Y."/>
            <person name="Wolk C.P."/>
            <person name="Kuritz T."/>
            <person name="Sasamoto S."/>
            <person name="Watanabe A."/>
            <person name="Iriguchi M."/>
            <person name="Ishikawa A."/>
            <person name="Kawashima K."/>
            <person name="Kimura T."/>
            <person name="Kishida Y."/>
            <person name="Kohara M."/>
            <person name="Matsumoto M."/>
            <person name="Matsuno A."/>
            <person name="Muraki A."/>
            <person name="Nakazaki N."/>
            <person name="Shimpo S."/>
            <person name="Sugimoto M."/>
            <person name="Takazawa M."/>
            <person name="Yamada M."/>
            <person name="Yasuda M."/>
            <person name="Tabata S."/>
        </authorList>
    </citation>
    <scope>NUCLEOTIDE SEQUENCE [LARGE SCALE GENOMIC DNA]</scope>
    <source>
        <strain>PCC 7120 / SAG 25.82 / UTEX 2576</strain>
    </source>
</reference>
<dbReference type="EMBL" id="AF242564">
    <property type="protein sequence ID" value="AAA21992.1"/>
    <property type="molecule type" value="Genomic_DNA"/>
</dbReference>
<dbReference type="EMBL" id="BA000019">
    <property type="protein sequence ID" value="BAB77528.1"/>
    <property type="molecule type" value="Genomic_DNA"/>
</dbReference>
<dbReference type="PIR" id="AD1807">
    <property type="entry name" value="AD1807"/>
</dbReference>
<dbReference type="PIR" id="H31090">
    <property type="entry name" value="H31090"/>
</dbReference>
<dbReference type="RefSeq" id="WP_010994181.1">
    <property type="nucleotide sequence ID" value="NZ_RSCN01000005.1"/>
</dbReference>
<dbReference type="SMR" id="P12408"/>
<dbReference type="STRING" id="103690.gene:10492008"/>
<dbReference type="KEGG" id="ana:all0004"/>
<dbReference type="eggNOG" id="COG0224">
    <property type="taxonomic scope" value="Bacteria"/>
</dbReference>
<dbReference type="OrthoDB" id="9812769at2"/>
<dbReference type="Proteomes" id="UP000002483">
    <property type="component" value="Chromosome"/>
</dbReference>
<dbReference type="GO" id="GO:0031676">
    <property type="term" value="C:plasma membrane-derived thylakoid membrane"/>
    <property type="evidence" value="ECO:0007669"/>
    <property type="project" value="UniProtKB-SubCell"/>
</dbReference>
<dbReference type="GO" id="GO:0045259">
    <property type="term" value="C:proton-transporting ATP synthase complex"/>
    <property type="evidence" value="ECO:0007669"/>
    <property type="project" value="UniProtKB-KW"/>
</dbReference>
<dbReference type="GO" id="GO:0005524">
    <property type="term" value="F:ATP binding"/>
    <property type="evidence" value="ECO:0007669"/>
    <property type="project" value="UniProtKB-UniRule"/>
</dbReference>
<dbReference type="GO" id="GO:0046933">
    <property type="term" value="F:proton-transporting ATP synthase activity, rotational mechanism"/>
    <property type="evidence" value="ECO:0007669"/>
    <property type="project" value="UniProtKB-UniRule"/>
</dbReference>
<dbReference type="CDD" id="cd12151">
    <property type="entry name" value="F1-ATPase_gamma"/>
    <property type="match status" value="1"/>
</dbReference>
<dbReference type="FunFam" id="3.40.1380.10:FF:000006">
    <property type="entry name" value="ATP synthase gamma chain"/>
    <property type="match status" value="1"/>
</dbReference>
<dbReference type="FunFam" id="1.10.287.80:FF:000003">
    <property type="entry name" value="ATP synthase gamma chain, chloroplastic"/>
    <property type="match status" value="1"/>
</dbReference>
<dbReference type="FunFam" id="1.10.287.80:FF:000004">
    <property type="entry name" value="ATP synthase gamma chain, chloroplastic"/>
    <property type="match status" value="1"/>
</dbReference>
<dbReference type="Gene3D" id="3.40.1380.10">
    <property type="match status" value="1"/>
</dbReference>
<dbReference type="Gene3D" id="1.10.287.80">
    <property type="entry name" value="ATP synthase, gamma subunit, helix hairpin domain"/>
    <property type="match status" value="2"/>
</dbReference>
<dbReference type="HAMAP" id="MF_00815">
    <property type="entry name" value="ATP_synth_gamma_bact"/>
    <property type="match status" value="1"/>
</dbReference>
<dbReference type="InterPro" id="IPR035968">
    <property type="entry name" value="ATP_synth_F1_ATPase_gsu"/>
</dbReference>
<dbReference type="InterPro" id="IPR000131">
    <property type="entry name" value="ATP_synth_F1_gsu"/>
</dbReference>
<dbReference type="InterPro" id="IPR023632">
    <property type="entry name" value="ATP_synth_F1_gsu_CS"/>
</dbReference>
<dbReference type="NCBIfam" id="TIGR01146">
    <property type="entry name" value="ATPsyn_F1gamma"/>
    <property type="match status" value="1"/>
</dbReference>
<dbReference type="NCBIfam" id="NF004145">
    <property type="entry name" value="PRK05621.1-2"/>
    <property type="match status" value="1"/>
</dbReference>
<dbReference type="PANTHER" id="PTHR11693">
    <property type="entry name" value="ATP SYNTHASE GAMMA CHAIN"/>
    <property type="match status" value="1"/>
</dbReference>
<dbReference type="PANTHER" id="PTHR11693:SF41">
    <property type="entry name" value="ATP SYNTHASE GAMMA CHAIN, CHLOROPLASTIC"/>
    <property type="match status" value="1"/>
</dbReference>
<dbReference type="Pfam" id="PF00231">
    <property type="entry name" value="ATP-synt"/>
    <property type="match status" value="1"/>
</dbReference>
<dbReference type="PRINTS" id="PR00126">
    <property type="entry name" value="ATPASEGAMMA"/>
</dbReference>
<dbReference type="SUPFAM" id="SSF52943">
    <property type="entry name" value="ATP synthase (F1-ATPase), gamma subunit"/>
    <property type="match status" value="1"/>
</dbReference>
<dbReference type="PROSITE" id="PS00153">
    <property type="entry name" value="ATPASE_GAMMA"/>
    <property type="match status" value="1"/>
</dbReference>
<comment type="function">
    <text evidence="1">Produces ATP from ADP in the presence of a proton gradient across the membrane. The gamma chain is believed to be important in regulating ATPase activity and the flow of protons through the CF(0) complex.</text>
</comment>
<comment type="subunit">
    <text evidence="1">F-type ATPases have 2 components, CF(1) - the catalytic core - and CF(0) - the membrane proton channel. CF(1) has five subunits: alpha(3), beta(3), gamma(1), delta(1), epsilon(1). CF(0) has three main subunits: a, b and c.</text>
</comment>
<comment type="subcellular location">
    <subcellularLocation>
        <location evidence="1">Cellular thylakoid membrane</location>
        <topology evidence="1">Peripheral membrane protein</topology>
    </subcellularLocation>
</comment>
<comment type="similarity">
    <text evidence="1">Belongs to the ATPase gamma chain family.</text>
</comment>
<keyword id="KW-0066">ATP synthesis</keyword>
<keyword id="KW-0139">CF(1)</keyword>
<keyword id="KW-0375">Hydrogen ion transport</keyword>
<keyword id="KW-0406">Ion transport</keyword>
<keyword id="KW-0472">Membrane</keyword>
<keyword id="KW-1185">Reference proteome</keyword>
<keyword id="KW-0793">Thylakoid</keyword>
<keyword id="KW-0813">Transport</keyword>
<sequence length="315" mass="35277">MPNLKSIRDRIQSVKNTKKITEAMRLVAAARVRRAQEQVIATRPFADRLAQVLYGLQTRLRFEDVDLPLLKKREVKSVGLLVISGDRGLCGGYNTNVIRRAENRAKELKAEGLDYTFVIVGRKAEQYFRRREQPIDASYTGLEQIPTADEANKIADELLSLFLSEKVDRIELVYTRFVSLVSSRPVIQTLLPLDTQGLEAADDEIFRLTTRGGQFQVERQTVTSQARPLPRDMIFEQDPVQILDSLLPLYLSNQLLRALQESAASELAARMTAMSNASENAGELIKSLSLSYNKARQAAITQELLEVVGGAEALT</sequence>
<evidence type="ECO:0000255" key="1">
    <source>
        <dbReference type="HAMAP-Rule" id="MF_00815"/>
    </source>
</evidence>
<evidence type="ECO:0000305" key="2"/>
<name>ATPG_NOSS1</name>
<gene>
    <name evidence="1" type="primary">atpG</name>
    <name evidence="1" type="synonym">atpC</name>
    <name type="ordered locus">all0004</name>
</gene>
<feature type="chain" id="PRO_0000073220" description="ATP synthase gamma chain">
    <location>
        <begin position="1"/>
        <end position="315"/>
    </location>
</feature>
<feature type="sequence conflict" description="In Ref. 1; AAA21992." evidence="2" ref="1">
    <original>M</original>
    <variation>S</variation>
    <location>
        <position position="233"/>
    </location>
</feature>